<keyword id="KW-1015">Disulfide bond</keyword>
<keyword id="KW-0325">Glycoprotein</keyword>
<keyword id="KW-0393">Immunoglobulin domain</keyword>
<keyword id="KW-0433">Leucine-rich repeat</keyword>
<keyword id="KW-0472">Membrane</keyword>
<keyword id="KW-1267">Proteomics identification</keyword>
<keyword id="KW-1185">Reference proteome</keyword>
<keyword id="KW-0677">Repeat</keyword>
<keyword id="KW-0732">Signal</keyword>
<keyword id="KW-0812">Transmembrane</keyword>
<keyword id="KW-1133">Transmembrane helix</keyword>
<proteinExistence type="evidence at protein level"/>
<protein>
    <recommendedName>
        <fullName>Leucine-rich repeat neuronal protein 2</fullName>
    </recommendedName>
    <alternativeName>
        <fullName>Glioma amplified on chromosome 1 protein</fullName>
    </alternativeName>
    <alternativeName>
        <fullName>Leucine-rich repeat neuronal protein 5</fullName>
    </alternativeName>
</protein>
<gene>
    <name type="primary">LRRN2</name>
    <name type="synonym">GAC1</name>
    <name type="synonym">LRRN5</name>
    <name type="ORF">UNQ256/PRO293</name>
</gene>
<comment type="subcellular location">
    <subcellularLocation>
        <location evidence="4">Membrane</location>
        <topology evidence="4">Single-pass type I membrane protein</topology>
    </subcellularLocation>
</comment>
<comment type="tissue specificity">
    <text>Overamplified in malignant gliomas.</text>
</comment>
<accession>O75325</accession>
<accession>B2R624</accession>
<accession>Q5T0Y0</accession>
<accession>Q6UXM0</accession>
<accession>Q8N182</accession>
<organism>
    <name type="scientific">Homo sapiens</name>
    <name type="common">Human</name>
    <dbReference type="NCBI Taxonomy" id="9606"/>
    <lineage>
        <taxon>Eukaryota</taxon>
        <taxon>Metazoa</taxon>
        <taxon>Chordata</taxon>
        <taxon>Craniata</taxon>
        <taxon>Vertebrata</taxon>
        <taxon>Euteleostomi</taxon>
        <taxon>Mammalia</taxon>
        <taxon>Eutheria</taxon>
        <taxon>Euarchontoglires</taxon>
        <taxon>Primates</taxon>
        <taxon>Haplorrhini</taxon>
        <taxon>Catarrhini</taxon>
        <taxon>Hominidae</taxon>
        <taxon>Homo</taxon>
    </lineage>
</organism>
<dbReference type="EMBL" id="AF030435">
    <property type="protein sequence ID" value="AAC39792.1"/>
    <property type="molecule type" value="mRNA"/>
</dbReference>
<dbReference type="EMBL" id="AY358290">
    <property type="protein sequence ID" value="AAQ88657.1"/>
    <property type="molecule type" value="mRNA"/>
</dbReference>
<dbReference type="EMBL" id="AK312408">
    <property type="protein sequence ID" value="BAG35321.1"/>
    <property type="molecule type" value="mRNA"/>
</dbReference>
<dbReference type="EMBL" id="AL512306">
    <property type="status" value="NOT_ANNOTATED_CDS"/>
    <property type="molecule type" value="Genomic_DNA"/>
</dbReference>
<dbReference type="EMBL" id="CH471067">
    <property type="protein sequence ID" value="EAW91520.1"/>
    <property type="molecule type" value="Genomic_DNA"/>
</dbReference>
<dbReference type="EMBL" id="BC034047">
    <property type="protein sequence ID" value="AAH34047.1"/>
    <property type="molecule type" value="mRNA"/>
</dbReference>
<dbReference type="EMBL" id="BC068541">
    <property type="protein sequence ID" value="AAH68541.1"/>
    <property type="molecule type" value="mRNA"/>
</dbReference>
<dbReference type="CCDS" id="CCDS1448.1"/>
<dbReference type="RefSeq" id="NP_006329.2">
    <property type="nucleotide sequence ID" value="NM_006338.2"/>
</dbReference>
<dbReference type="RefSeq" id="NP_963924.1">
    <property type="nucleotide sequence ID" value="NM_201630.2"/>
</dbReference>
<dbReference type="RefSeq" id="XP_005244884.1">
    <property type="nucleotide sequence ID" value="XM_005244827.3"/>
</dbReference>
<dbReference type="RefSeq" id="XP_011507368.1">
    <property type="nucleotide sequence ID" value="XM_011509066.2"/>
</dbReference>
<dbReference type="RefSeq" id="XP_016855539.1">
    <property type="nucleotide sequence ID" value="XM_017000050.1"/>
</dbReference>
<dbReference type="SMR" id="O75325"/>
<dbReference type="BioGRID" id="115711">
    <property type="interactions" value="53"/>
</dbReference>
<dbReference type="FunCoup" id="O75325">
    <property type="interactions" value="91"/>
</dbReference>
<dbReference type="IntAct" id="O75325">
    <property type="interactions" value="28"/>
</dbReference>
<dbReference type="STRING" id="9606.ENSP00000356143"/>
<dbReference type="GlyCosmos" id="O75325">
    <property type="glycosylation" value="4 sites, No reported glycans"/>
</dbReference>
<dbReference type="GlyGen" id="O75325">
    <property type="glycosylation" value="5 sites, 2 N-linked glycans (2 sites)"/>
</dbReference>
<dbReference type="iPTMnet" id="O75325"/>
<dbReference type="PhosphoSitePlus" id="O75325"/>
<dbReference type="BioMuta" id="LRRN2"/>
<dbReference type="MassIVE" id="O75325"/>
<dbReference type="PaxDb" id="9606-ENSP00000356143"/>
<dbReference type="PeptideAtlas" id="O75325"/>
<dbReference type="ProteomicsDB" id="49895"/>
<dbReference type="Antibodypedia" id="34560">
    <property type="antibodies" value="112 antibodies from 21 providers"/>
</dbReference>
<dbReference type="DNASU" id="10446"/>
<dbReference type="Ensembl" id="ENST00000367175.1">
    <property type="protein sequence ID" value="ENSP00000356143.1"/>
    <property type="gene ID" value="ENSG00000170382.12"/>
</dbReference>
<dbReference type="Ensembl" id="ENST00000367176.7">
    <property type="protein sequence ID" value="ENSP00000356144.3"/>
    <property type="gene ID" value="ENSG00000170382.12"/>
</dbReference>
<dbReference type="Ensembl" id="ENST00000367177.4">
    <property type="protein sequence ID" value="ENSP00000356145.3"/>
    <property type="gene ID" value="ENSG00000170382.12"/>
</dbReference>
<dbReference type="GeneID" id="10446"/>
<dbReference type="KEGG" id="hsa:10446"/>
<dbReference type="MANE-Select" id="ENST00000367177.4">
    <property type="protein sequence ID" value="ENSP00000356145.3"/>
    <property type="RefSeq nucleotide sequence ID" value="NM_201630.2"/>
    <property type="RefSeq protein sequence ID" value="NP_963924.1"/>
</dbReference>
<dbReference type="UCSC" id="uc001hbe.3">
    <property type="organism name" value="human"/>
</dbReference>
<dbReference type="AGR" id="HGNC:16914"/>
<dbReference type="CTD" id="10446"/>
<dbReference type="DisGeNET" id="10446"/>
<dbReference type="GeneCards" id="LRRN2"/>
<dbReference type="HGNC" id="HGNC:16914">
    <property type="gene designation" value="LRRN2"/>
</dbReference>
<dbReference type="HPA" id="ENSG00000170382">
    <property type="expression patterns" value="Tissue enhanced (choroid)"/>
</dbReference>
<dbReference type="MIM" id="605492">
    <property type="type" value="gene"/>
</dbReference>
<dbReference type="neXtProt" id="NX_O75325"/>
<dbReference type="OpenTargets" id="ENSG00000170382"/>
<dbReference type="PharmGKB" id="PA162394661"/>
<dbReference type="VEuPathDB" id="HostDB:ENSG00000170382"/>
<dbReference type="eggNOG" id="KOG0619">
    <property type="taxonomic scope" value="Eukaryota"/>
</dbReference>
<dbReference type="GeneTree" id="ENSGT00940000161204"/>
<dbReference type="HOGENOM" id="CLU_000288_18_18_1"/>
<dbReference type="InParanoid" id="O75325"/>
<dbReference type="OMA" id="LPAWAFW"/>
<dbReference type="OrthoDB" id="635273at2759"/>
<dbReference type="PAN-GO" id="O75325">
    <property type="GO annotations" value="2 GO annotations based on evolutionary models"/>
</dbReference>
<dbReference type="PhylomeDB" id="O75325"/>
<dbReference type="TreeFam" id="TF334360"/>
<dbReference type="PathwayCommons" id="O75325"/>
<dbReference type="SignaLink" id="O75325"/>
<dbReference type="BioGRID-ORCS" id="10446">
    <property type="hits" value="11 hits in 1145 CRISPR screens"/>
</dbReference>
<dbReference type="GeneWiki" id="LRRN2"/>
<dbReference type="GenomeRNAi" id="10446"/>
<dbReference type="Pharos" id="O75325">
    <property type="development level" value="Tbio"/>
</dbReference>
<dbReference type="PRO" id="PR:O75325"/>
<dbReference type="Proteomes" id="UP000005640">
    <property type="component" value="Chromosome 1"/>
</dbReference>
<dbReference type="RNAct" id="O75325">
    <property type="molecule type" value="protein"/>
</dbReference>
<dbReference type="Bgee" id="ENSG00000170382">
    <property type="expression patterns" value="Expressed in prefrontal cortex and 128 other cell types or tissues"/>
</dbReference>
<dbReference type="ExpressionAtlas" id="O75325">
    <property type="expression patterns" value="baseline and differential"/>
</dbReference>
<dbReference type="GO" id="GO:0031012">
    <property type="term" value="C:extracellular matrix"/>
    <property type="evidence" value="ECO:0000318"/>
    <property type="project" value="GO_Central"/>
</dbReference>
<dbReference type="GO" id="GO:0005615">
    <property type="term" value="C:extracellular space"/>
    <property type="evidence" value="ECO:0000318"/>
    <property type="project" value="GO_Central"/>
</dbReference>
<dbReference type="GO" id="GO:0016020">
    <property type="term" value="C:membrane"/>
    <property type="evidence" value="ECO:0007669"/>
    <property type="project" value="UniProtKB-SubCell"/>
</dbReference>
<dbReference type="GO" id="GO:0038023">
    <property type="term" value="F:signaling receptor activity"/>
    <property type="evidence" value="ECO:0000304"/>
    <property type="project" value="ProtInc"/>
</dbReference>
<dbReference type="GO" id="GO:0007155">
    <property type="term" value="P:cell adhesion"/>
    <property type="evidence" value="ECO:0000304"/>
    <property type="project" value="ProtInc"/>
</dbReference>
<dbReference type="GO" id="GO:0007165">
    <property type="term" value="P:signal transduction"/>
    <property type="evidence" value="ECO:0000304"/>
    <property type="project" value="ProtInc"/>
</dbReference>
<dbReference type="FunFam" id="3.80.10.10:FF:000522">
    <property type="entry name" value="Leucine rich repeat neuronal 2"/>
    <property type="match status" value="1"/>
</dbReference>
<dbReference type="FunFam" id="2.60.40.10:FF:000887">
    <property type="entry name" value="leucine-rich repeat neuronal protein 2"/>
    <property type="match status" value="1"/>
</dbReference>
<dbReference type="FunFam" id="3.80.10.10:FF:000301">
    <property type="entry name" value="leucine-rich repeat neuronal protein 2"/>
    <property type="match status" value="1"/>
</dbReference>
<dbReference type="Gene3D" id="2.60.40.10">
    <property type="entry name" value="Immunoglobulins"/>
    <property type="match status" value="1"/>
</dbReference>
<dbReference type="Gene3D" id="3.80.10.10">
    <property type="entry name" value="Ribonuclease Inhibitor"/>
    <property type="match status" value="2"/>
</dbReference>
<dbReference type="InterPro" id="IPR000483">
    <property type="entry name" value="Cys-rich_flank_reg_C"/>
</dbReference>
<dbReference type="InterPro" id="IPR007110">
    <property type="entry name" value="Ig-like_dom"/>
</dbReference>
<dbReference type="InterPro" id="IPR036179">
    <property type="entry name" value="Ig-like_dom_sf"/>
</dbReference>
<dbReference type="InterPro" id="IPR013783">
    <property type="entry name" value="Ig-like_fold"/>
</dbReference>
<dbReference type="InterPro" id="IPR013098">
    <property type="entry name" value="Ig_I-set"/>
</dbReference>
<dbReference type="InterPro" id="IPR003599">
    <property type="entry name" value="Ig_sub"/>
</dbReference>
<dbReference type="InterPro" id="IPR003598">
    <property type="entry name" value="Ig_sub2"/>
</dbReference>
<dbReference type="InterPro" id="IPR001611">
    <property type="entry name" value="Leu-rich_rpt"/>
</dbReference>
<dbReference type="InterPro" id="IPR003591">
    <property type="entry name" value="Leu-rich_rpt_typical-subtyp"/>
</dbReference>
<dbReference type="InterPro" id="IPR032675">
    <property type="entry name" value="LRR_dom_sf"/>
</dbReference>
<dbReference type="InterPro" id="IPR050541">
    <property type="entry name" value="LRR_TM_domain-containing"/>
</dbReference>
<dbReference type="PANTHER" id="PTHR24369">
    <property type="entry name" value="ANTIGEN BSP, PUTATIVE-RELATED"/>
    <property type="match status" value="1"/>
</dbReference>
<dbReference type="PANTHER" id="PTHR24369:SF210">
    <property type="entry name" value="CHAOPTIN-RELATED"/>
    <property type="match status" value="1"/>
</dbReference>
<dbReference type="Pfam" id="PF07679">
    <property type="entry name" value="I-set"/>
    <property type="match status" value="1"/>
</dbReference>
<dbReference type="Pfam" id="PF13855">
    <property type="entry name" value="LRR_8"/>
    <property type="match status" value="3"/>
</dbReference>
<dbReference type="SMART" id="SM00409">
    <property type="entry name" value="IG"/>
    <property type="match status" value="1"/>
</dbReference>
<dbReference type="SMART" id="SM00408">
    <property type="entry name" value="IGc2"/>
    <property type="match status" value="1"/>
</dbReference>
<dbReference type="SMART" id="SM00365">
    <property type="entry name" value="LRR_SD22"/>
    <property type="match status" value="3"/>
</dbReference>
<dbReference type="SMART" id="SM00369">
    <property type="entry name" value="LRR_TYP"/>
    <property type="match status" value="10"/>
</dbReference>
<dbReference type="SMART" id="SM00082">
    <property type="entry name" value="LRRCT"/>
    <property type="match status" value="1"/>
</dbReference>
<dbReference type="SUPFAM" id="SSF48726">
    <property type="entry name" value="Immunoglobulin"/>
    <property type="match status" value="1"/>
</dbReference>
<dbReference type="SUPFAM" id="SSF52058">
    <property type="entry name" value="L domain-like"/>
    <property type="match status" value="1"/>
</dbReference>
<dbReference type="PROSITE" id="PS50835">
    <property type="entry name" value="IG_LIKE"/>
    <property type="match status" value="1"/>
</dbReference>
<dbReference type="PROSITE" id="PS51450">
    <property type="entry name" value="LRR"/>
    <property type="match status" value="9"/>
</dbReference>
<sequence length="713" mass="78859">MRLLVAPLLLAWVAGATAAVPVVPWHVPCPPQCACQIRPWYTPRSSYREATTVDCNDLFLTAVPPALPAGTQTLLLQSNSIVRVDQSELGYLANLTELDLSQNSFSDARDCDFHALPQLLSLHLEENQLTRLEDHSFAGLASLQELYLNHNQLYRIAPRAFSGLSNLLRLHLNSNLLRAIDSRWFEMLPNLEILMIGGNKVDAILDMNFRPLANLRSLVLAGMNLREISDYALEGLQSLESLSFYDNQLARVPRRALEQVPGLKFLDLNKNPLQRVGPGDFANMLHLKELGLNNMEELVSIDKFALVNLPELTKLDITNNPRLSFIHPRAFHHLPQMETLMLNNNALSALHQQTVESLPNLQEVGLHGNPIRCDCVIRWANATGTRVRFIEPQSTLCAEPPDLQRLPVREVPFREMTDHCLPLISPRSFPPSLQVASGESMVLHCRALAEPEPEIYWVTPAGLRLTPAHAGRRYRVYPEGTLELRRVTAEEAGLYTCVAQNLVGADTKTVSVVVGRALLQPGRDEGQGLELRVQETHPYHILLSWVTPPNTVSTNLTWSSASSLRGQGATALARLPRGTHSYNITRLLQATEYWACLQVAFADAHTQLACVWARTKEATSCHRALGDRPGLIAILALAVLLLAAGLAAHLGTGQPRKGVGGRRPLPPAWAFWGWSAPSVRVVSAPLVLPWNPGRKLPRSSEGETLLPPLSQNS</sequence>
<reference key="1">
    <citation type="journal article" date="1998" name="Oncogene">
        <title>GAC1, a new member of the leucine-rich repeat superfamily on chromosome band 1q32.1, is amplified and overexpressed in malignant gliomas.</title>
        <authorList>
            <person name="Malfoy B."/>
            <person name="Almeida A."/>
            <person name="Zhu X.X."/>
            <person name="Vogt N."/>
            <person name="Tyagi R."/>
            <person name="Muleris M."/>
            <person name="Dutrillaux A.-M."/>
            <person name="Dutrillaux B."/>
            <person name="Ross D."/>
            <person name="Hanash S."/>
        </authorList>
    </citation>
    <scope>NUCLEOTIDE SEQUENCE [MRNA]</scope>
    <source>
        <tissue>Glial tumor</tissue>
    </source>
</reference>
<reference key="2">
    <citation type="journal article" date="2003" name="Genome Res.">
        <title>The secreted protein discovery initiative (SPDI), a large-scale effort to identify novel human secreted and transmembrane proteins: a bioinformatics assessment.</title>
        <authorList>
            <person name="Clark H.F."/>
            <person name="Gurney A.L."/>
            <person name="Abaya E."/>
            <person name="Baker K."/>
            <person name="Baldwin D.T."/>
            <person name="Brush J."/>
            <person name="Chen J."/>
            <person name="Chow B."/>
            <person name="Chui C."/>
            <person name="Crowley C."/>
            <person name="Currell B."/>
            <person name="Deuel B."/>
            <person name="Dowd P."/>
            <person name="Eaton D."/>
            <person name="Foster J.S."/>
            <person name="Grimaldi C."/>
            <person name="Gu Q."/>
            <person name="Hass P.E."/>
            <person name="Heldens S."/>
            <person name="Huang A."/>
            <person name="Kim H.S."/>
            <person name="Klimowski L."/>
            <person name="Jin Y."/>
            <person name="Johnson S."/>
            <person name="Lee J."/>
            <person name="Lewis L."/>
            <person name="Liao D."/>
            <person name="Mark M.R."/>
            <person name="Robbie E."/>
            <person name="Sanchez C."/>
            <person name="Schoenfeld J."/>
            <person name="Seshagiri S."/>
            <person name="Simmons L."/>
            <person name="Singh J."/>
            <person name="Smith V."/>
            <person name="Stinson J."/>
            <person name="Vagts A."/>
            <person name="Vandlen R.L."/>
            <person name="Watanabe C."/>
            <person name="Wieand D."/>
            <person name="Woods K."/>
            <person name="Xie M.-H."/>
            <person name="Yansura D.G."/>
            <person name="Yi S."/>
            <person name="Yu G."/>
            <person name="Yuan J."/>
            <person name="Zhang M."/>
            <person name="Zhang Z."/>
            <person name="Goddard A.D."/>
            <person name="Wood W.I."/>
            <person name="Godowski P.J."/>
            <person name="Gray A.M."/>
        </authorList>
    </citation>
    <scope>NUCLEOTIDE SEQUENCE [LARGE SCALE MRNA]</scope>
    <scope>VARIANT THR-19</scope>
</reference>
<reference key="3">
    <citation type="journal article" date="2004" name="Nat. Genet.">
        <title>Complete sequencing and characterization of 21,243 full-length human cDNAs.</title>
        <authorList>
            <person name="Ota T."/>
            <person name="Suzuki Y."/>
            <person name="Nishikawa T."/>
            <person name="Otsuki T."/>
            <person name="Sugiyama T."/>
            <person name="Irie R."/>
            <person name="Wakamatsu A."/>
            <person name="Hayashi K."/>
            <person name="Sato H."/>
            <person name="Nagai K."/>
            <person name="Kimura K."/>
            <person name="Makita H."/>
            <person name="Sekine M."/>
            <person name="Obayashi M."/>
            <person name="Nishi T."/>
            <person name="Shibahara T."/>
            <person name="Tanaka T."/>
            <person name="Ishii S."/>
            <person name="Yamamoto J."/>
            <person name="Saito K."/>
            <person name="Kawai Y."/>
            <person name="Isono Y."/>
            <person name="Nakamura Y."/>
            <person name="Nagahari K."/>
            <person name="Murakami K."/>
            <person name="Yasuda T."/>
            <person name="Iwayanagi T."/>
            <person name="Wagatsuma M."/>
            <person name="Shiratori A."/>
            <person name="Sudo H."/>
            <person name="Hosoiri T."/>
            <person name="Kaku Y."/>
            <person name="Kodaira H."/>
            <person name="Kondo H."/>
            <person name="Sugawara M."/>
            <person name="Takahashi M."/>
            <person name="Kanda K."/>
            <person name="Yokoi T."/>
            <person name="Furuya T."/>
            <person name="Kikkawa E."/>
            <person name="Omura Y."/>
            <person name="Abe K."/>
            <person name="Kamihara K."/>
            <person name="Katsuta N."/>
            <person name="Sato K."/>
            <person name="Tanikawa M."/>
            <person name="Yamazaki M."/>
            <person name="Ninomiya K."/>
            <person name="Ishibashi T."/>
            <person name="Yamashita H."/>
            <person name="Murakawa K."/>
            <person name="Fujimori K."/>
            <person name="Tanai H."/>
            <person name="Kimata M."/>
            <person name="Watanabe M."/>
            <person name="Hiraoka S."/>
            <person name="Chiba Y."/>
            <person name="Ishida S."/>
            <person name="Ono Y."/>
            <person name="Takiguchi S."/>
            <person name="Watanabe S."/>
            <person name="Yosida M."/>
            <person name="Hotuta T."/>
            <person name="Kusano J."/>
            <person name="Kanehori K."/>
            <person name="Takahashi-Fujii A."/>
            <person name="Hara H."/>
            <person name="Tanase T.-O."/>
            <person name="Nomura Y."/>
            <person name="Togiya S."/>
            <person name="Komai F."/>
            <person name="Hara R."/>
            <person name="Takeuchi K."/>
            <person name="Arita M."/>
            <person name="Imose N."/>
            <person name="Musashino K."/>
            <person name="Yuuki H."/>
            <person name="Oshima A."/>
            <person name="Sasaki N."/>
            <person name="Aotsuka S."/>
            <person name="Yoshikawa Y."/>
            <person name="Matsunawa H."/>
            <person name="Ichihara T."/>
            <person name="Shiohata N."/>
            <person name="Sano S."/>
            <person name="Moriya S."/>
            <person name="Momiyama H."/>
            <person name="Satoh N."/>
            <person name="Takami S."/>
            <person name="Terashima Y."/>
            <person name="Suzuki O."/>
            <person name="Nakagawa S."/>
            <person name="Senoh A."/>
            <person name="Mizoguchi H."/>
            <person name="Goto Y."/>
            <person name="Shimizu F."/>
            <person name="Wakebe H."/>
            <person name="Hishigaki H."/>
            <person name="Watanabe T."/>
            <person name="Sugiyama A."/>
            <person name="Takemoto M."/>
            <person name="Kawakami B."/>
            <person name="Yamazaki M."/>
            <person name="Watanabe K."/>
            <person name="Kumagai A."/>
            <person name="Itakura S."/>
            <person name="Fukuzumi Y."/>
            <person name="Fujimori Y."/>
            <person name="Komiyama M."/>
            <person name="Tashiro H."/>
            <person name="Tanigami A."/>
            <person name="Fujiwara T."/>
            <person name="Ono T."/>
            <person name="Yamada K."/>
            <person name="Fujii Y."/>
            <person name="Ozaki K."/>
            <person name="Hirao M."/>
            <person name="Ohmori Y."/>
            <person name="Kawabata A."/>
            <person name="Hikiji T."/>
            <person name="Kobatake N."/>
            <person name="Inagaki H."/>
            <person name="Ikema Y."/>
            <person name="Okamoto S."/>
            <person name="Okitani R."/>
            <person name="Kawakami T."/>
            <person name="Noguchi S."/>
            <person name="Itoh T."/>
            <person name="Shigeta K."/>
            <person name="Senba T."/>
            <person name="Matsumura K."/>
            <person name="Nakajima Y."/>
            <person name="Mizuno T."/>
            <person name="Morinaga M."/>
            <person name="Sasaki M."/>
            <person name="Togashi T."/>
            <person name="Oyama M."/>
            <person name="Hata H."/>
            <person name="Watanabe M."/>
            <person name="Komatsu T."/>
            <person name="Mizushima-Sugano J."/>
            <person name="Satoh T."/>
            <person name="Shirai Y."/>
            <person name="Takahashi Y."/>
            <person name="Nakagawa K."/>
            <person name="Okumura K."/>
            <person name="Nagase T."/>
            <person name="Nomura N."/>
            <person name="Kikuchi H."/>
            <person name="Masuho Y."/>
            <person name="Yamashita R."/>
            <person name="Nakai K."/>
            <person name="Yada T."/>
            <person name="Nakamura Y."/>
            <person name="Ohara O."/>
            <person name="Isogai T."/>
            <person name="Sugano S."/>
        </authorList>
    </citation>
    <scope>NUCLEOTIDE SEQUENCE [LARGE SCALE MRNA]</scope>
    <source>
        <tissue>Brain</tissue>
    </source>
</reference>
<reference key="4">
    <citation type="journal article" date="2006" name="Nature">
        <title>The DNA sequence and biological annotation of human chromosome 1.</title>
        <authorList>
            <person name="Gregory S.G."/>
            <person name="Barlow K.F."/>
            <person name="McLay K.E."/>
            <person name="Kaul R."/>
            <person name="Swarbreck D."/>
            <person name="Dunham A."/>
            <person name="Scott C.E."/>
            <person name="Howe K.L."/>
            <person name="Woodfine K."/>
            <person name="Spencer C.C.A."/>
            <person name="Jones M.C."/>
            <person name="Gillson C."/>
            <person name="Searle S."/>
            <person name="Zhou Y."/>
            <person name="Kokocinski F."/>
            <person name="McDonald L."/>
            <person name="Evans R."/>
            <person name="Phillips K."/>
            <person name="Atkinson A."/>
            <person name="Cooper R."/>
            <person name="Jones C."/>
            <person name="Hall R.E."/>
            <person name="Andrews T.D."/>
            <person name="Lloyd C."/>
            <person name="Ainscough R."/>
            <person name="Almeida J.P."/>
            <person name="Ambrose K.D."/>
            <person name="Anderson F."/>
            <person name="Andrew R.W."/>
            <person name="Ashwell R.I.S."/>
            <person name="Aubin K."/>
            <person name="Babbage A.K."/>
            <person name="Bagguley C.L."/>
            <person name="Bailey J."/>
            <person name="Beasley H."/>
            <person name="Bethel G."/>
            <person name="Bird C.P."/>
            <person name="Bray-Allen S."/>
            <person name="Brown J.Y."/>
            <person name="Brown A.J."/>
            <person name="Buckley D."/>
            <person name="Burton J."/>
            <person name="Bye J."/>
            <person name="Carder C."/>
            <person name="Chapman J.C."/>
            <person name="Clark S.Y."/>
            <person name="Clarke G."/>
            <person name="Clee C."/>
            <person name="Cobley V."/>
            <person name="Collier R.E."/>
            <person name="Corby N."/>
            <person name="Coville G.J."/>
            <person name="Davies J."/>
            <person name="Deadman R."/>
            <person name="Dunn M."/>
            <person name="Earthrowl M."/>
            <person name="Ellington A.G."/>
            <person name="Errington H."/>
            <person name="Frankish A."/>
            <person name="Frankland J."/>
            <person name="French L."/>
            <person name="Garner P."/>
            <person name="Garnett J."/>
            <person name="Gay L."/>
            <person name="Ghori M.R.J."/>
            <person name="Gibson R."/>
            <person name="Gilby L.M."/>
            <person name="Gillett W."/>
            <person name="Glithero R.J."/>
            <person name="Grafham D.V."/>
            <person name="Griffiths C."/>
            <person name="Griffiths-Jones S."/>
            <person name="Grocock R."/>
            <person name="Hammond S."/>
            <person name="Harrison E.S.I."/>
            <person name="Hart E."/>
            <person name="Haugen E."/>
            <person name="Heath P.D."/>
            <person name="Holmes S."/>
            <person name="Holt K."/>
            <person name="Howden P.J."/>
            <person name="Hunt A.R."/>
            <person name="Hunt S.E."/>
            <person name="Hunter G."/>
            <person name="Isherwood J."/>
            <person name="James R."/>
            <person name="Johnson C."/>
            <person name="Johnson D."/>
            <person name="Joy A."/>
            <person name="Kay M."/>
            <person name="Kershaw J.K."/>
            <person name="Kibukawa M."/>
            <person name="Kimberley A.M."/>
            <person name="King A."/>
            <person name="Knights A.J."/>
            <person name="Lad H."/>
            <person name="Laird G."/>
            <person name="Lawlor S."/>
            <person name="Leongamornlert D.A."/>
            <person name="Lloyd D.M."/>
            <person name="Loveland J."/>
            <person name="Lovell J."/>
            <person name="Lush M.J."/>
            <person name="Lyne R."/>
            <person name="Martin S."/>
            <person name="Mashreghi-Mohammadi M."/>
            <person name="Matthews L."/>
            <person name="Matthews N.S.W."/>
            <person name="McLaren S."/>
            <person name="Milne S."/>
            <person name="Mistry S."/>
            <person name="Moore M.J.F."/>
            <person name="Nickerson T."/>
            <person name="O'Dell C.N."/>
            <person name="Oliver K."/>
            <person name="Palmeiri A."/>
            <person name="Palmer S.A."/>
            <person name="Parker A."/>
            <person name="Patel D."/>
            <person name="Pearce A.V."/>
            <person name="Peck A.I."/>
            <person name="Pelan S."/>
            <person name="Phelps K."/>
            <person name="Phillimore B.J."/>
            <person name="Plumb R."/>
            <person name="Rajan J."/>
            <person name="Raymond C."/>
            <person name="Rouse G."/>
            <person name="Saenphimmachak C."/>
            <person name="Sehra H.K."/>
            <person name="Sheridan E."/>
            <person name="Shownkeen R."/>
            <person name="Sims S."/>
            <person name="Skuce C.D."/>
            <person name="Smith M."/>
            <person name="Steward C."/>
            <person name="Subramanian S."/>
            <person name="Sycamore N."/>
            <person name="Tracey A."/>
            <person name="Tromans A."/>
            <person name="Van Helmond Z."/>
            <person name="Wall M."/>
            <person name="Wallis J.M."/>
            <person name="White S."/>
            <person name="Whitehead S.L."/>
            <person name="Wilkinson J.E."/>
            <person name="Willey D.L."/>
            <person name="Williams H."/>
            <person name="Wilming L."/>
            <person name="Wray P.W."/>
            <person name="Wu Z."/>
            <person name="Coulson A."/>
            <person name="Vaudin M."/>
            <person name="Sulston J.E."/>
            <person name="Durbin R.M."/>
            <person name="Hubbard T."/>
            <person name="Wooster R."/>
            <person name="Dunham I."/>
            <person name="Carter N.P."/>
            <person name="McVean G."/>
            <person name="Ross M.T."/>
            <person name="Harrow J."/>
            <person name="Olson M.V."/>
            <person name="Beck S."/>
            <person name="Rogers J."/>
            <person name="Bentley D.R."/>
        </authorList>
    </citation>
    <scope>NUCLEOTIDE SEQUENCE [LARGE SCALE GENOMIC DNA]</scope>
</reference>
<reference key="5">
    <citation type="submission" date="2005-07" db="EMBL/GenBank/DDBJ databases">
        <authorList>
            <person name="Mural R.J."/>
            <person name="Istrail S."/>
            <person name="Sutton G.G."/>
            <person name="Florea L."/>
            <person name="Halpern A.L."/>
            <person name="Mobarry C.M."/>
            <person name="Lippert R."/>
            <person name="Walenz B."/>
            <person name="Shatkay H."/>
            <person name="Dew I."/>
            <person name="Miller J.R."/>
            <person name="Flanigan M.J."/>
            <person name="Edwards N.J."/>
            <person name="Bolanos R."/>
            <person name="Fasulo D."/>
            <person name="Halldorsson B.V."/>
            <person name="Hannenhalli S."/>
            <person name="Turner R."/>
            <person name="Yooseph S."/>
            <person name="Lu F."/>
            <person name="Nusskern D.R."/>
            <person name="Shue B.C."/>
            <person name="Zheng X.H."/>
            <person name="Zhong F."/>
            <person name="Delcher A.L."/>
            <person name="Huson D.H."/>
            <person name="Kravitz S.A."/>
            <person name="Mouchard L."/>
            <person name="Reinert K."/>
            <person name="Remington K.A."/>
            <person name="Clark A.G."/>
            <person name="Waterman M.S."/>
            <person name="Eichler E.E."/>
            <person name="Adams M.D."/>
            <person name="Hunkapiller M.W."/>
            <person name="Myers E.W."/>
            <person name="Venter J.C."/>
        </authorList>
    </citation>
    <scope>NUCLEOTIDE SEQUENCE [LARGE SCALE GENOMIC DNA]</scope>
</reference>
<reference key="6">
    <citation type="journal article" date="2004" name="Genome Res.">
        <title>The status, quality, and expansion of the NIH full-length cDNA project: the Mammalian Gene Collection (MGC).</title>
        <authorList>
            <consortium name="The MGC Project Team"/>
        </authorList>
    </citation>
    <scope>NUCLEOTIDE SEQUENCE [LARGE SCALE MRNA]</scope>
    <source>
        <tissue>Brain</tissue>
    </source>
</reference>
<evidence type="ECO:0000255" key="1"/>
<evidence type="ECO:0000255" key="2">
    <source>
        <dbReference type="PROSITE-ProRule" id="PRU00114"/>
    </source>
</evidence>
<evidence type="ECO:0000269" key="3">
    <source>
    </source>
</evidence>
<evidence type="ECO:0000305" key="4"/>
<name>LRRN2_HUMAN</name>
<feature type="signal peptide" evidence="1">
    <location>
        <begin position="1"/>
        <end position="18"/>
    </location>
</feature>
<feature type="chain" id="PRO_0000014849" description="Leucine-rich repeat neuronal protein 2">
    <location>
        <begin position="19"/>
        <end position="713"/>
    </location>
</feature>
<feature type="topological domain" description="Extracellular" evidence="1">
    <location>
        <begin position="19"/>
        <end position="630"/>
    </location>
</feature>
<feature type="transmembrane region" description="Helical" evidence="1">
    <location>
        <begin position="631"/>
        <end position="651"/>
    </location>
</feature>
<feature type="topological domain" description="Cytoplasmic" evidence="1">
    <location>
        <begin position="652"/>
        <end position="713"/>
    </location>
</feature>
<feature type="domain" description="LRRNT">
    <location>
        <begin position="20"/>
        <end position="69"/>
    </location>
</feature>
<feature type="repeat" description="LRR 1">
    <location>
        <begin position="70"/>
        <end position="91"/>
    </location>
</feature>
<feature type="repeat" description="LRR 2">
    <location>
        <begin position="94"/>
        <end position="115"/>
    </location>
</feature>
<feature type="repeat" description="LRR 3">
    <location>
        <begin position="118"/>
        <end position="139"/>
    </location>
</feature>
<feature type="repeat" description="LRR 4">
    <location>
        <begin position="142"/>
        <end position="163"/>
    </location>
</feature>
<feature type="repeat" description="LRR 5">
    <location>
        <begin position="166"/>
        <end position="187"/>
    </location>
</feature>
<feature type="repeat" description="LRR 6">
    <location>
        <begin position="190"/>
        <end position="211"/>
    </location>
</feature>
<feature type="repeat" description="LRR 7">
    <location>
        <begin position="214"/>
        <end position="235"/>
    </location>
</feature>
<feature type="repeat" description="LRR 8">
    <location>
        <begin position="238"/>
        <end position="259"/>
    </location>
</feature>
<feature type="repeat" description="LRR 9">
    <location>
        <begin position="262"/>
        <end position="283"/>
    </location>
</feature>
<feature type="repeat" description="LRR 10">
    <location>
        <begin position="286"/>
        <end position="305"/>
    </location>
</feature>
<feature type="repeat" description="LRR 11">
    <location>
        <begin position="311"/>
        <end position="333"/>
    </location>
</feature>
<feature type="repeat" description="LRR 12">
    <location>
        <begin position="336"/>
        <end position="357"/>
    </location>
</feature>
<feature type="domain" description="LRRCT">
    <location>
        <begin position="369"/>
        <end position="422"/>
    </location>
</feature>
<feature type="domain" description="Ig-like C2-type">
    <location>
        <begin position="422"/>
        <end position="511"/>
    </location>
</feature>
<feature type="glycosylation site" description="N-linked (GlcNAc...) asparagine" evidence="1">
    <location>
        <position position="94"/>
    </location>
</feature>
<feature type="glycosylation site" description="N-linked (GlcNAc...) asparagine" evidence="1">
    <location>
        <position position="381"/>
    </location>
</feature>
<feature type="glycosylation site" description="N-linked (GlcNAc...) asparagine" evidence="1">
    <location>
        <position position="555"/>
    </location>
</feature>
<feature type="glycosylation site" description="N-linked (GlcNAc...) asparagine" evidence="1">
    <location>
        <position position="583"/>
    </location>
</feature>
<feature type="disulfide bond" evidence="2">
    <location>
        <begin position="445"/>
        <end position="497"/>
    </location>
</feature>
<feature type="sequence variant" id="VAR_021921" description="In dbSNP:rs3789044.">
    <original>P</original>
    <variation>L</variation>
    <location>
        <position position="7"/>
    </location>
</feature>
<feature type="sequence variant" id="VAR_049898" description="In dbSNP:rs36012907." evidence="3">
    <original>A</original>
    <variation>T</variation>
    <location>
        <position position="19"/>
    </location>
</feature>
<feature type="sequence variant" id="VAR_021922" description="In dbSNP:rs3747631.">
    <original>L</original>
    <variation>V</variation>
    <location>
        <position position="518"/>
    </location>
</feature>
<feature type="sequence variant" id="VAR_049899" description="In dbSNP:rs34771052.">
    <original>V</original>
    <variation>A</variation>
    <location>
        <position position="659"/>
    </location>
</feature>
<feature type="sequence variant" id="VAR_049900" description="In dbSNP:rs11588857.">
    <original>P</original>
    <variation>S</variation>
    <location>
        <position position="692"/>
    </location>
</feature>
<feature type="sequence conflict" description="In Ref. 6; AAH34047/AAH68541." evidence="4" ref="6">
    <original>V</original>
    <variation>A</variation>
    <location>
        <position position="355"/>
    </location>
</feature>
<feature type="sequence conflict" description="In Ref. 1; AAC39792." evidence="4" ref="1">
    <original>Y</original>
    <variation>C</variation>
    <location>
        <position position="474"/>
    </location>
</feature>
<feature type="sequence conflict" description="In Ref. 6; AAH34047/AAH68541." evidence="4" ref="6">
    <original>A</original>
    <variation>P</variation>
    <location>
        <position position="676"/>
    </location>
</feature>